<organism>
    <name type="scientific">Pongo abelii</name>
    <name type="common">Sumatran orangutan</name>
    <name type="synonym">Pongo pygmaeus abelii</name>
    <dbReference type="NCBI Taxonomy" id="9601"/>
    <lineage>
        <taxon>Eukaryota</taxon>
        <taxon>Metazoa</taxon>
        <taxon>Chordata</taxon>
        <taxon>Craniata</taxon>
        <taxon>Vertebrata</taxon>
        <taxon>Euteleostomi</taxon>
        <taxon>Mammalia</taxon>
        <taxon>Eutheria</taxon>
        <taxon>Euarchontoglires</taxon>
        <taxon>Primates</taxon>
        <taxon>Haplorrhini</taxon>
        <taxon>Catarrhini</taxon>
        <taxon>Hominidae</taxon>
        <taxon>Pongo</taxon>
    </lineage>
</organism>
<protein>
    <recommendedName>
        <fullName>Fructose-bisphosphate aldolase B</fullName>
        <ecNumber evidence="3">4.1.2.13</ecNumber>
    </recommendedName>
    <alternativeName>
        <fullName>Liver-type aldolase</fullName>
    </alternativeName>
</protein>
<gene>
    <name type="primary">ALDOB</name>
</gene>
<name>ALDOB_PONAB</name>
<reference key="1">
    <citation type="submission" date="2004-11" db="EMBL/GenBank/DDBJ databases">
        <authorList>
            <consortium name="The German cDNA consortium"/>
        </authorList>
    </citation>
    <scope>NUCLEOTIDE SEQUENCE [LARGE SCALE MRNA]</scope>
    <source>
        <tissue>Kidney</tissue>
    </source>
</reference>
<accession>Q5RFA6</accession>
<proteinExistence type="evidence at transcript level"/>
<keyword id="KW-0007">Acetylation</keyword>
<keyword id="KW-0963">Cytoplasm</keyword>
<keyword id="KW-0206">Cytoskeleton</keyword>
<keyword id="KW-0324">Glycolysis</keyword>
<keyword id="KW-0456">Lyase</keyword>
<keyword id="KW-0597">Phosphoprotein</keyword>
<keyword id="KW-1185">Reference proteome</keyword>
<keyword id="KW-0704">Schiff base</keyword>
<dbReference type="EC" id="4.1.2.13" evidence="3"/>
<dbReference type="EMBL" id="CR857255">
    <property type="protein sequence ID" value="CAH89551.1"/>
    <property type="molecule type" value="mRNA"/>
</dbReference>
<dbReference type="RefSeq" id="NP_001127166.1">
    <property type="nucleotide sequence ID" value="NM_001133694.1"/>
</dbReference>
<dbReference type="SMR" id="Q5RFA6"/>
<dbReference type="FunCoup" id="Q5RFA6">
    <property type="interactions" value="791"/>
</dbReference>
<dbReference type="STRING" id="9601.ENSPPYP00000021797"/>
<dbReference type="GeneID" id="100174217"/>
<dbReference type="KEGG" id="pon:100174217"/>
<dbReference type="CTD" id="229"/>
<dbReference type="eggNOG" id="KOG1557">
    <property type="taxonomic scope" value="Eukaryota"/>
</dbReference>
<dbReference type="InParanoid" id="Q5RFA6"/>
<dbReference type="OrthoDB" id="36455at2759"/>
<dbReference type="UniPathway" id="UPA00109">
    <property type="reaction ID" value="UER00183"/>
</dbReference>
<dbReference type="UniPathway" id="UPA00138"/>
<dbReference type="UniPathway" id="UPA00202"/>
<dbReference type="Proteomes" id="UP000001595">
    <property type="component" value="Unplaced"/>
</dbReference>
<dbReference type="GO" id="GO:0034451">
    <property type="term" value="C:centriolar satellite"/>
    <property type="evidence" value="ECO:0007669"/>
    <property type="project" value="UniProtKB-SubCell"/>
</dbReference>
<dbReference type="GO" id="GO:0005829">
    <property type="term" value="C:cytosol"/>
    <property type="evidence" value="ECO:0007669"/>
    <property type="project" value="UniProtKB-SubCell"/>
</dbReference>
<dbReference type="GO" id="GO:0061609">
    <property type="term" value="F:fructose-1-phosphate aldolase activity"/>
    <property type="evidence" value="ECO:0000250"/>
    <property type="project" value="UniProtKB"/>
</dbReference>
<dbReference type="GO" id="GO:0004332">
    <property type="term" value="F:fructose-bisphosphate aldolase activity"/>
    <property type="evidence" value="ECO:0000250"/>
    <property type="project" value="UniProtKB"/>
</dbReference>
<dbReference type="GO" id="GO:0006000">
    <property type="term" value="P:fructose metabolic process"/>
    <property type="evidence" value="ECO:0007669"/>
    <property type="project" value="UniProtKB-UniPathway"/>
</dbReference>
<dbReference type="GO" id="GO:0006094">
    <property type="term" value="P:gluconeogenesis"/>
    <property type="evidence" value="ECO:0007669"/>
    <property type="project" value="UniProtKB-UniPathway"/>
</dbReference>
<dbReference type="GO" id="GO:0006096">
    <property type="term" value="P:glycolytic process"/>
    <property type="evidence" value="ECO:0000250"/>
    <property type="project" value="UniProtKB"/>
</dbReference>
<dbReference type="CDD" id="cd00948">
    <property type="entry name" value="FBP_aldolase_I_a"/>
    <property type="match status" value="1"/>
</dbReference>
<dbReference type="FunFam" id="3.20.20.70:FF:000021">
    <property type="entry name" value="Fructose-bisphosphate aldolase"/>
    <property type="match status" value="1"/>
</dbReference>
<dbReference type="Gene3D" id="3.20.20.70">
    <property type="entry name" value="Aldolase class I"/>
    <property type="match status" value="1"/>
</dbReference>
<dbReference type="InterPro" id="IPR029768">
    <property type="entry name" value="Aldolase_I_AS"/>
</dbReference>
<dbReference type="InterPro" id="IPR013785">
    <property type="entry name" value="Aldolase_TIM"/>
</dbReference>
<dbReference type="InterPro" id="IPR000741">
    <property type="entry name" value="FBA_I"/>
</dbReference>
<dbReference type="NCBIfam" id="NF033379">
    <property type="entry name" value="FrucBisAld_I"/>
    <property type="match status" value="1"/>
</dbReference>
<dbReference type="PANTHER" id="PTHR11627">
    <property type="entry name" value="FRUCTOSE-BISPHOSPHATE ALDOLASE"/>
    <property type="match status" value="1"/>
</dbReference>
<dbReference type="Pfam" id="PF00274">
    <property type="entry name" value="Glycolytic"/>
    <property type="match status" value="1"/>
</dbReference>
<dbReference type="SUPFAM" id="SSF51569">
    <property type="entry name" value="Aldolase"/>
    <property type="match status" value="1"/>
</dbReference>
<dbReference type="PROSITE" id="PS00158">
    <property type="entry name" value="ALDOLASE_CLASS_I"/>
    <property type="match status" value="1"/>
</dbReference>
<feature type="initiator methionine" description="Removed" evidence="4">
    <location>
        <position position="1"/>
    </location>
</feature>
<feature type="chain" id="PRO_0000230296" description="Fructose-bisphosphate aldolase B">
    <location>
        <begin position="2"/>
        <end position="364"/>
    </location>
</feature>
<feature type="active site" description="Proton acceptor" evidence="1">
    <location>
        <position position="188"/>
    </location>
</feature>
<feature type="active site" description="Schiff-base intermediate with dihydroxyacetone-P" evidence="1">
    <location>
        <position position="230"/>
    </location>
</feature>
<feature type="binding site" evidence="1">
    <location>
        <position position="43"/>
    </location>
    <ligand>
        <name>beta-D-fructose 1,6-bisphosphate</name>
        <dbReference type="ChEBI" id="CHEBI:32966"/>
    </ligand>
</feature>
<feature type="binding site" evidence="1">
    <location>
        <begin position="272"/>
        <end position="274"/>
    </location>
    <ligand>
        <name>beta-D-fructose 1,6-bisphosphate</name>
        <dbReference type="ChEBI" id="CHEBI:32966"/>
    </ligand>
</feature>
<feature type="binding site" evidence="1">
    <location>
        <position position="304"/>
    </location>
    <ligand>
        <name>beta-D-fructose 1,6-bisphosphate</name>
        <dbReference type="ChEBI" id="CHEBI:32966"/>
    </ligand>
</feature>
<feature type="site" description="Necessary for preference for fructose 1,6-bisphosphate over fructose 1-phosphate" evidence="1">
    <location>
        <position position="364"/>
    </location>
</feature>
<feature type="modified residue" description="N-acetylalanine" evidence="4">
    <location>
        <position position="2"/>
    </location>
</feature>
<feature type="modified residue" description="N6-succinyllysine" evidence="4">
    <location>
        <position position="13"/>
    </location>
</feature>
<feature type="modified residue" description="Phosphoserine" evidence="3">
    <location>
        <position position="36"/>
    </location>
</feature>
<feature type="modified residue" description="Phosphothreonine" evidence="3">
    <location>
        <position position="39"/>
    </location>
</feature>
<feature type="modified residue" description="Phosphoserine" evidence="3">
    <location>
        <position position="89"/>
    </location>
</feature>
<feature type="modified residue" description="Phosphothreonine" evidence="3">
    <location>
        <position position="119"/>
    </location>
</feature>
<feature type="modified residue" description="N6-succinyllysine" evidence="4">
    <location>
        <position position="121"/>
    </location>
</feature>
<feature type="modified residue" description="Phosphoserine" evidence="3">
    <location>
        <position position="132"/>
    </location>
</feature>
<feature type="modified residue" description="Phosphoserine" evidence="3">
    <location>
        <position position="272"/>
    </location>
</feature>
<feature type="modified residue" description="Phosphoserine" evidence="3">
    <location>
        <position position="276"/>
    </location>
</feature>
<feature type="modified residue" description="Phosphoserine" evidence="2">
    <location>
        <position position="299"/>
    </location>
</feature>
<feature type="modified residue" description="Phosphoserine" evidence="2">
    <location>
        <position position="301"/>
    </location>
</feature>
<feature type="modified residue" description="Phosphoserine" evidence="3">
    <location>
        <position position="309"/>
    </location>
</feature>
<feature type="modified residue" description="N6-succinyllysine" evidence="4">
    <location>
        <position position="317"/>
    </location>
</feature>
<evidence type="ECO:0000250" key="1">
    <source>
        <dbReference type="UniProtKB" id="P00883"/>
    </source>
</evidence>
<evidence type="ECO:0000250" key="2">
    <source>
        <dbReference type="UniProtKB" id="P00884"/>
    </source>
</evidence>
<evidence type="ECO:0000250" key="3">
    <source>
        <dbReference type="UniProtKB" id="P05062"/>
    </source>
</evidence>
<evidence type="ECO:0000250" key="4">
    <source>
        <dbReference type="UniProtKB" id="Q91Y97"/>
    </source>
</evidence>
<evidence type="ECO:0000305" key="5"/>
<sequence length="364" mass="39447">MAHRFPALTQEQKKELSEIAQSIVANGKGILAADESVGTMGNRLQRIKVENTEENRRQFREILFSVDSSINQSIGGVILFHETLYQKDSQGKLFRNILKEKGIVVGIKLDQGGAPLAGTNKETTIQGLDGLSERCAQYKKDGVDFGKWRAVLRIADQCPSSLAIQENANALARYASICQQNGLVPIVEPEVIPDGDHDLEHCQYVTEKVLAAAYKALNDHHVYLEGTLLKPNMVTAGHACTKKYTPEQVAMATVTALHRTVPAAVPGICFLSGGMSEEDATLNLNAINLCPLPKPWKLSFSYGRALQASALAAWGGKAANKEATQEAFMKRAVANHQAAKGQYVHTGSSGAASTQSLFTACYTY</sequence>
<comment type="function">
    <text evidence="3">Catalyzes the aldol cleavage of fructose 1,6-biphosphate to form two triosephosphates dihydroxyacetone phosphate and D-glyceraldehyde 3-phosphate in glycolysis as well as the reverse stereospecific aldol addition reaction in gluconeogenesis. In fructolysis, metabolizes fructose 1-phosphate derived from the phosphorylation of dietary fructose by fructokinase into dihydroxyacetone phosphate and D-glyceraldehyde (By similarity). Acts as an adapter independently of its enzymatic activity, exerts a tumor suppressor role by stabilizing the ternary complex with G6PD and TP53 to inhibit G6PD activity and keep oxidative pentose phosphate metabolism in check (By similarity).</text>
</comment>
<comment type="catalytic activity">
    <reaction evidence="3">
        <text>beta-D-fructose 1,6-bisphosphate = D-glyceraldehyde 3-phosphate + dihydroxyacetone phosphate</text>
        <dbReference type="Rhea" id="RHEA:14729"/>
        <dbReference type="ChEBI" id="CHEBI:32966"/>
        <dbReference type="ChEBI" id="CHEBI:57642"/>
        <dbReference type="ChEBI" id="CHEBI:59776"/>
        <dbReference type="EC" id="4.1.2.13"/>
    </reaction>
    <physiologicalReaction direction="left-to-right" evidence="3">
        <dbReference type="Rhea" id="RHEA:14730"/>
    </physiologicalReaction>
    <physiologicalReaction direction="right-to-left" evidence="3">
        <dbReference type="Rhea" id="RHEA:14731"/>
    </physiologicalReaction>
</comment>
<comment type="catalytic activity">
    <reaction evidence="3">
        <text>beta-D-fructose 1-phosphate = D-glyceraldehyde + dihydroxyacetone phosphate</text>
        <dbReference type="Rhea" id="RHEA:30851"/>
        <dbReference type="ChEBI" id="CHEBI:17378"/>
        <dbReference type="ChEBI" id="CHEBI:57642"/>
        <dbReference type="ChEBI" id="CHEBI:138881"/>
    </reaction>
    <physiologicalReaction direction="left-to-right" evidence="3">
        <dbReference type="Rhea" id="RHEA:30852"/>
    </physiologicalReaction>
    <physiologicalReaction direction="right-to-left" evidence="3">
        <dbReference type="Rhea" id="RHEA:30853"/>
    </physiologicalReaction>
</comment>
<comment type="pathway">
    <text evidence="3">Carbohydrate degradation; glycolysis; D-glyceraldehyde 3-phosphate and glycerone phosphate from D-glucose: step 4/4.</text>
</comment>
<comment type="pathway">
    <text evidence="3">Carbohydrate biosynthesis; gluconeogenesis.</text>
</comment>
<comment type="pathway">
    <text evidence="3">Carbohydrate metabolism; fructose metabolism.</text>
</comment>
<comment type="subunit">
    <text evidence="3">Homotetramer. Interacts with BBS1, BBS2, BBS4 and BBS7. Forms a ternary complex with G6PD and TP53; this interaction is direct.</text>
</comment>
<comment type="subcellular location">
    <subcellularLocation>
        <location evidence="3">Cytoplasm</location>
        <location evidence="3">Cytosol</location>
    </subcellularLocation>
    <subcellularLocation>
        <location evidence="3">Cytoplasm</location>
        <location evidence="3">Cytoskeleton</location>
        <location evidence="3">Microtubule organizing center</location>
        <location evidence="3">Centrosome</location>
        <location evidence="3">Centriolar satellite</location>
    </subcellularLocation>
</comment>
<comment type="miscellaneous">
    <text>In vertebrates, 3 forms of this ubiquitous glycolytic enzyme are found, aldolase A in muscle, aldolase B in liver and aldolase C in brain.</text>
</comment>
<comment type="similarity">
    <text evidence="5">Belongs to the class I fructose-bisphosphate aldolase family.</text>
</comment>